<reference key="1">
    <citation type="journal article" date="2001" name="Nature">
        <title>Complete genome sequence of a multiple drug resistant Salmonella enterica serovar Typhi CT18.</title>
        <authorList>
            <person name="Parkhill J."/>
            <person name="Dougan G."/>
            <person name="James K.D."/>
            <person name="Thomson N.R."/>
            <person name="Pickard D."/>
            <person name="Wain J."/>
            <person name="Churcher C.M."/>
            <person name="Mungall K.L."/>
            <person name="Bentley S.D."/>
            <person name="Holden M.T.G."/>
            <person name="Sebaihia M."/>
            <person name="Baker S."/>
            <person name="Basham D."/>
            <person name="Brooks K."/>
            <person name="Chillingworth T."/>
            <person name="Connerton P."/>
            <person name="Cronin A."/>
            <person name="Davis P."/>
            <person name="Davies R.M."/>
            <person name="Dowd L."/>
            <person name="White N."/>
            <person name="Farrar J."/>
            <person name="Feltwell T."/>
            <person name="Hamlin N."/>
            <person name="Haque A."/>
            <person name="Hien T.T."/>
            <person name="Holroyd S."/>
            <person name="Jagels K."/>
            <person name="Krogh A."/>
            <person name="Larsen T.S."/>
            <person name="Leather S."/>
            <person name="Moule S."/>
            <person name="O'Gaora P."/>
            <person name="Parry C."/>
            <person name="Quail M.A."/>
            <person name="Rutherford K.M."/>
            <person name="Simmonds M."/>
            <person name="Skelton J."/>
            <person name="Stevens K."/>
            <person name="Whitehead S."/>
            <person name="Barrell B.G."/>
        </authorList>
    </citation>
    <scope>NUCLEOTIDE SEQUENCE [LARGE SCALE GENOMIC DNA]</scope>
    <source>
        <strain>CT18</strain>
    </source>
</reference>
<reference key="2">
    <citation type="journal article" date="2003" name="J. Bacteriol.">
        <title>Comparative genomics of Salmonella enterica serovar Typhi strains Ty2 and CT18.</title>
        <authorList>
            <person name="Deng W."/>
            <person name="Liou S.-R."/>
            <person name="Plunkett G. III"/>
            <person name="Mayhew G.F."/>
            <person name="Rose D.J."/>
            <person name="Burland V."/>
            <person name="Kodoyianni V."/>
            <person name="Schwartz D.C."/>
            <person name="Blattner F.R."/>
        </authorList>
    </citation>
    <scope>NUCLEOTIDE SEQUENCE [LARGE SCALE GENOMIC DNA]</scope>
    <source>
        <strain>ATCC 700931 / Ty2</strain>
    </source>
</reference>
<comment type="function">
    <text evidence="1">A putative bidirectional acetate kinase that may drive flux through the ethanolamine degradation pathway under anoxic conditions found when this bacteria infects host intestine. It may generate ATP that can be used by other enzymes (EutA and EutT) in the eut pathway.</text>
</comment>
<comment type="catalytic activity">
    <reaction evidence="1">
        <text>acetate + ATP = acetyl phosphate + ADP</text>
        <dbReference type="Rhea" id="RHEA:11352"/>
        <dbReference type="ChEBI" id="CHEBI:22191"/>
        <dbReference type="ChEBI" id="CHEBI:30089"/>
        <dbReference type="ChEBI" id="CHEBI:30616"/>
        <dbReference type="ChEBI" id="CHEBI:456216"/>
        <dbReference type="EC" id="2.7.2.1"/>
    </reaction>
    <physiologicalReaction direction="left-to-right" evidence="1">
        <dbReference type="Rhea" id="RHEA:11353"/>
    </physiologicalReaction>
    <physiologicalReaction direction="right-to-left" evidence="1">
        <dbReference type="Rhea" id="RHEA:11354"/>
    </physiologicalReaction>
</comment>
<comment type="pathway">
    <text>Amine and polyamine degradation; ethanolamine degradation.</text>
</comment>
<comment type="subcellular location">
    <subcellularLocation>
        <location evidence="1">Bacterial microcompartment</location>
    </subcellularLocation>
</comment>
<comment type="similarity">
    <text evidence="3">Belongs to the EutP/PduV family.</text>
</comment>
<accession>P0A209</accession>
<accession>Q9ZFV6</accession>
<proteinExistence type="inferred from homology"/>
<protein>
    <recommendedName>
        <fullName>Probable acetate kinase EutP</fullName>
        <ecNumber evidence="1">2.7.2.1</ecNumber>
    </recommendedName>
    <alternativeName>
        <fullName>Ethanolamine utilization protein EutP</fullName>
    </alternativeName>
</protein>
<evidence type="ECO:0000250" key="1">
    <source>
        <dbReference type="UniProtKB" id="P0A208"/>
    </source>
</evidence>
<evidence type="ECO:0000255" key="2"/>
<evidence type="ECO:0000305" key="3"/>
<gene>
    <name type="primary">eutP</name>
    <name type="ordered locus">STY2705</name>
    <name type="ordered locus">t0390</name>
</gene>
<dbReference type="EC" id="2.7.2.1" evidence="1"/>
<dbReference type="EMBL" id="AL513382">
    <property type="protein sequence ID" value="CAD07699.1"/>
    <property type="molecule type" value="Genomic_DNA"/>
</dbReference>
<dbReference type="EMBL" id="AE014613">
    <property type="protein sequence ID" value="AAO68108.1"/>
    <property type="molecule type" value="Genomic_DNA"/>
</dbReference>
<dbReference type="RefSeq" id="NP_457003.1">
    <property type="nucleotide sequence ID" value="NC_003198.1"/>
</dbReference>
<dbReference type="RefSeq" id="WP_000820751.1">
    <property type="nucleotide sequence ID" value="NZ_WSUR01000025.1"/>
</dbReference>
<dbReference type="SMR" id="P0A209"/>
<dbReference type="STRING" id="220341.gene:17586603"/>
<dbReference type="KEGG" id="stt:t0390"/>
<dbReference type="KEGG" id="sty:STY2705"/>
<dbReference type="PATRIC" id="fig|220341.7.peg.2742"/>
<dbReference type="eggNOG" id="COG4917">
    <property type="taxonomic scope" value="Bacteria"/>
</dbReference>
<dbReference type="HOGENOM" id="CLU_113298_2_0_6"/>
<dbReference type="OMA" id="PGEYMEN"/>
<dbReference type="OrthoDB" id="8586209at2"/>
<dbReference type="UniPathway" id="UPA00560"/>
<dbReference type="Proteomes" id="UP000000541">
    <property type="component" value="Chromosome"/>
</dbReference>
<dbReference type="Proteomes" id="UP000002670">
    <property type="component" value="Chromosome"/>
</dbReference>
<dbReference type="GO" id="GO:0031469">
    <property type="term" value="C:bacterial microcompartment"/>
    <property type="evidence" value="ECO:0007669"/>
    <property type="project" value="UniProtKB-SubCell"/>
</dbReference>
<dbReference type="GO" id="GO:0008776">
    <property type="term" value="F:acetate kinase activity"/>
    <property type="evidence" value="ECO:0007669"/>
    <property type="project" value="UniProtKB-EC"/>
</dbReference>
<dbReference type="GO" id="GO:0005524">
    <property type="term" value="F:ATP binding"/>
    <property type="evidence" value="ECO:0007669"/>
    <property type="project" value="UniProtKB-KW"/>
</dbReference>
<dbReference type="GO" id="GO:0046336">
    <property type="term" value="P:ethanolamine catabolic process"/>
    <property type="evidence" value="ECO:0007669"/>
    <property type="project" value="UniProtKB-UniPathway"/>
</dbReference>
<dbReference type="CDD" id="cd00882">
    <property type="entry name" value="Ras_like_GTPase"/>
    <property type="match status" value="1"/>
</dbReference>
<dbReference type="Gene3D" id="3.40.50.300">
    <property type="entry name" value="P-loop containing nucleotide triphosphate hydrolases"/>
    <property type="match status" value="1"/>
</dbReference>
<dbReference type="InterPro" id="IPR012381">
    <property type="entry name" value="EutP_PduV"/>
</dbReference>
<dbReference type="InterPro" id="IPR027417">
    <property type="entry name" value="P-loop_NTPase"/>
</dbReference>
<dbReference type="NCBIfam" id="TIGR02528">
    <property type="entry name" value="EutP"/>
    <property type="match status" value="1"/>
</dbReference>
<dbReference type="NCBIfam" id="NF012011">
    <property type="entry name" value="PRK15467.1"/>
    <property type="match status" value="1"/>
</dbReference>
<dbReference type="PANTHER" id="PTHR40453:SF2">
    <property type="entry name" value="ACETATE KINASE EUTP-RELATED"/>
    <property type="match status" value="1"/>
</dbReference>
<dbReference type="PANTHER" id="PTHR40453">
    <property type="entry name" value="PROTEIN YOEF"/>
    <property type="match status" value="1"/>
</dbReference>
<dbReference type="Pfam" id="PF10662">
    <property type="entry name" value="PduV-EutP"/>
    <property type="match status" value="1"/>
</dbReference>
<dbReference type="PIRSF" id="PIRSF036409">
    <property type="entry name" value="EutP_PduV"/>
    <property type="match status" value="1"/>
</dbReference>
<dbReference type="SUPFAM" id="SSF52540">
    <property type="entry name" value="P-loop containing nucleoside triphosphate hydrolases"/>
    <property type="match status" value="1"/>
</dbReference>
<name>EUTP_SALTI</name>
<organism>
    <name type="scientific">Salmonella typhi</name>
    <dbReference type="NCBI Taxonomy" id="90370"/>
    <lineage>
        <taxon>Bacteria</taxon>
        <taxon>Pseudomonadati</taxon>
        <taxon>Pseudomonadota</taxon>
        <taxon>Gammaproteobacteria</taxon>
        <taxon>Enterobacterales</taxon>
        <taxon>Enterobacteriaceae</taxon>
        <taxon>Salmonella</taxon>
    </lineage>
</organism>
<keyword id="KW-0067">ATP-binding</keyword>
<keyword id="KW-1283">Bacterial microcompartment</keyword>
<keyword id="KW-0418">Kinase</keyword>
<keyword id="KW-0547">Nucleotide-binding</keyword>
<keyword id="KW-0808">Transferase</keyword>
<sequence>MKRIAFVGAVGAGKTTLFNALRGNYSLARKTQAVEFNDHGDIDTPGEYFSHPRWYHALITTLQDVDTLIYVHAANDKESRLPAGLLDVGTRKRHIAVISKTDMPDADVAATRQLLCEIGFREPIFELNGHDPQSVRQLVDYLAALSEQEEEAGEKTYHS</sequence>
<feature type="chain" id="PRO_0000087095" description="Probable acetate kinase EutP">
    <location>
        <begin position="1"/>
        <end position="159"/>
    </location>
</feature>
<feature type="binding site" evidence="2">
    <location>
        <begin position="8"/>
        <end position="15"/>
    </location>
    <ligand>
        <name>ATP</name>
        <dbReference type="ChEBI" id="CHEBI:30616"/>
    </ligand>
</feature>